<gene>
    <name evidence="1" type="primary">trpR</name>
    <name type="ordered locus">ECIAI1_4617</name>
</gene>
<keyword id="KW-0963">Cytoplasm</keyword>
<keyword id="KW-0238">DNA-binding</keyword>
<keyword id="KW-0678">Repressor</keyword>
<keyword id="KW-0804">Transcription</keyword>
<keyword id="KW-0805">Transcription regulation</keyword>
<comment type="function">
    <text evidence="1">This protein is an aporepressor. When complexed with L-tryptophan it binds the operator region of the trp operon (5'-ACTAGT-'3') and prevents the initiation of transcription. The complex also regulates trp repressor biosynthesis by binding to its regulatory region.</text>
</comment>
<comment type="subunit">
    <text evidence="1">Homodimer.</text>
</comment>
<comment type="subcellular location">
    <subcellularLocation>
        <location evidence="1">Cytoplasm</location>
    </subcellularLocation>
</comment>
<comment type="similarity">
    <text evidence="1">Belongs to the TrpR family.</text>
</comment>
<protein>
    <recommendedName>
        <fullName evidence="1">Trp operon repressor</fullName>
    </recommendedName>
</protein>
<sequence>MAQQSPYSAAMAEQRHQEWLRFVDLLKNAYQNDLHLPLLNLMLTPDEREALGTRVRIVEELLRGEMSQRELKNELGAGIATITRGSNSLKAAPVELRQWLEEVLLKSD</sequence>
<accession>B7LXV6</accession>
<feature type="chain" id="PRO_1000197148" description="Trp operon repressor">
    <location>
        <begin position="1"/>
        <end position="108"/>
    </location>
</feature>
<feature type="DNA-binding region" evidence="1">
    <location>
        <begin position="68"/>
        <end position="91"/>
    </location>
</feature>
<dbReference type="EMBL" id="CU928160">
    <property type="protein sequence ID" value="CAR01357.1"/>
    <property type="molecule type" value="Genomic_DNA"/>
</dbReference>
<dbReference type="RefSeq" id="WP_000068679.1">
    <property type="nucleotide sequence ID" value="NC_011741.1"/>
</dbReference>
<dbReference type="SMR" id="B7LXV6"/>
<dbReference type="GeneID" id="93777452"/>
<dbReference type="KEGG" id="ecr:ECIAI1_4617"/>
<dbReference type="HOGENOM" id="CLU_147939_0_0_6"/>
<dbReference type="GO" id="GO:0005737">
    <property type="term" value="C:cytoplasm"/>
    <property type="evidence" value="ECO:0007669"/>
    <property type="project" value="UniProtKB-SubCell"/>
</dbReference>
<dbReference type="GO" id="GO:0003700">
    <property type="term" value="F:DNA-binding transcription factor activity"/>
    <property type="evidence" value="ECO:0007669"/>
    <property type="project" value="InterPro"/>
</dbReference>
<dbReference type="GO" id="GO:0043565">
    <property type="term" value="F:sequence-specific DNA binding"/>
    <property type="evidence" value="ECO:0007669"/>
    <property type="project" value="InterPro"/>
</dbReference>
<dbReference type="GO" id="GO:0045892">
    <property type="term" value="P:negative regulation of DNA-templated transcription"/>
    <property type="evidence" value="ECO:0007669"/>
    <property type="project" value="UniProtKB-UniRule"/>
</dbReference>
<dbReference type="FunFam" id="1.10.1270.10:FF:000001">
    <property type="entry name" value="Trp operon repressor"/>
    <property type="match status" value="1"/>
</dbReference>
<dbReference type="Gene3D" id="1.10.1270.10">
    <property type="entry name" value="TrpR-like"/>
    <property type="match status" value="1"/>
</dbReference>
<dbReference type="HAMAP" id="MF_00475">
    <property type="entry name" value="Trp_repressor"/>
    <property type="match status" value="1"/>
</dbReference>
<dbReference type="InterPro" id="IPR000831">
    <property type="entry name" value="Trp_repress"/>
</dbReference>
<dbReference type="InterPro" id="IPR013335">
    <property type="entry name" value="Trp_repress_bac"/>
</dbReference>
<dbReference type="InterPro" id="IPR010921">
    <property type="entry name" value="Trp_repressor/repl_initiator"/>
</dbReference>
<dbReference type="InterPro" id="IPR038116">
    <property type="entry name" value="TrpR-like_sf"/>
</dbReference>
<dbReference type="NCBIfam" id="TIGR01321">
    <property type="entry name" value="TrpR"/>
    <property type="match status" value="1"/>
</dbReference>
<dbReference type="PANTHER" id="PTHR38025">
    <property type="entry name" value="TRP OPERON REPRESSOR"/>
    <property type="match status" value="1"/>
</dbReference>
<dbReference type="PANTHER" id="PTHR38025:SF1">
    <property type="entry name" value="TRP OPERON REPRESSOR"/>
    <property type="match status" value="1"/>
</dbReference>
<dbReference type="Pfam" id="PF01371">
    <property type="entry name" value="Trp_repressor"/>
    <property type="match status" value="1"/>
</dbReference>
<dbReference type="PIRSF" id="PIRSF003196">
    <property type="entry name" value="Trp_repressor"/>
    <property type="match status" value="1"/>
</dbReference>
<dbReference type="SUPFAM" id="SSF48295">
    <property type="entry name" value="TrpR-like"/>
    <property type="match status" value="1"/>
</dbReference>
<reference key="1">
    <citation type="journal article" date="2009" name="PLoS Genet.">
        <title>Organised genome dynamics in the Escherichia coli species results in highly diverse adaptive paths.</title>
        <authorList>
            <person name="Touchon M."/>
            <person name="Hoede C."/>
            <person name="Tenaillon O."/>
            <person name="Barbe V."/>
            <person name="Baeriswyl S."/>
            <person name="Bidet P."/>
            <person name="Bingen E."/>
            <person name="Bonacorsi S."/>
            <person name="Bouchier C."/>
            <person name="Bouvet O."/>
            <person name="Calteau A."/>
            <person name="Chiapello H."/>
            <person name="Clermont O."/>
            <person name="Cruveiller S."/>
            <person name="Danchin A."/>
            <person name="Diard M."/>
            <person name="Dossat C."/>
            <person name="Karoui M.E."/>
            <person name="Frapy E."/>
            <person name="Garry L."/>
            <person name="Ghigo J.M."/>
            <person name="Gilles A.M."/>
            <person name="Johnson J."/>
            <person name="Le Bouguenec C."/>
            <person name="Lescat M."/>
            <person name="Mangenot S."/>
            <person name="Martinez-Jehanne V."/>
            <person name="Matic I."/>
            <person name="Nassif X."/>
            <person name="Oztas S."/>
            <person name="Petit M.A."/>
            <person name="Pichon C."/>
            <person name="Rouy Z."/>
            <person name="Ruf C.S."/>
            <person name="Schneider D."/>
            <person name="Tourret J."/>
            <person name="Vacherie B."/>
            <person name="Vallenet D."/>
            <person name="Medigue C."/>
            <person name="Rocha E.P.C."/>
            <person name="Denamur E."/>
        </authorList>
    </citation>
    <scope>NUCLEOTIDE SEQUENCE [LARGE SCALE GENOMIC DNA]</scope>
    <source>
        <strain>IAI1</strain>
    </source>
</reference>
<proteinExistence type="inferred from homology"/>
<organism>
    <name type="scientific">Escherichia coli O8 (strain IAI1)</name>
    <dbReference type="NCBI Taxonomy" id="585034"/>
    <lineage>
        <taxon>Bacteria</taxon>
        <taxon>Pseudomonadati</taxon>
        <taxon>Pseudomonadota</taxon>
        <taxon>Gammaproteobacteria</taxon>
        <taxon>Enterobacterales</taxon>
        <taxon>Enterobacteriaceae</taxon>
        <taxon>Escherichia</taxon>
    </lineage>
</organism>
<name>TRPR_ECO8A</name>
<evidence type="ECO:0000255" key="1">
    <source>
        <dbReference type="HAMAP-Rule" id="MF_00475"/>
    </source>
</evidence>